<evidence type="ECO:0000255" key="1">
    <source>
        <dbReference type="HAMAP-Rule" id="MF_01315"/>
    </source>
</evidence>
<evidence type="ECO:0000256" key="2">
    <source>
        <dbReference type="SAM" id="MobiDB-lite"/>
    </source>
</evidence>
<evidence type="ECO:0000305" key="3"/>
<dbReference type="EMBL" id="AE017354">
    <property type="protein sequence ID" value="AAU26448.1"/>
    <property type="molecule type" value="Genomic_DNA"/>
</dbReference>
<dbReference type="RefSeq" id="WP_010946100.1">
    <property type="nucleotide sequence ID" value="NC_002942.5"/>
</dbReference>
<dbReference type="RefSeq" id="YP_094395.1">
    <property type="nucleotide sequence ID" value="NC_002942.5"/>
</dbReference>
<dbReference type="SMR" id="Q5ZYM1"/>
<dbReference type="STRING" id="272624.lpg0351"/>
<dbReference type="PaxDb" id="272624-lpg0351"/>
<dbReference type="GeneID" id="57034354"/>
<dbReference type="KEGG" id="lpn:lpg0351"/>
<dbReference type="PATRIC" id="fig|272624.6.peg.358"/>
<dbReference type="eggNOG" id="COG0099">
    <property type="taxonomic scope" value="Bacteria"/>
</dbReference>
<dbReference type="HOGENOM" id="CLU_103849_1_2_6"/>
<dbReference type="OrthoDB" id="9803610at2"/>
<dbReference type="Proteomes" id="UP000000609">
    <property type="component" value="Chromosome"/>
</dbReference>
<dbReference type="GO" id="GO:0005829">
    <property type="term" value="C:cytosol"/>
    <property type="evidence" value="ECO:0007669"/>
    <property type="project" value="TreeGrafter"/>
</dbReference>
<dbReference type="GO" id="GO:0015935">
    <property type="term" value="C:small ribosomal subunit"/>
    <property type="evidence" value="ECO:0007669"/>
    <property type="project" value="TreeGrafter"/>
</dbReference>
<dbReference type="GO" id="GO:0019843">
    <property type="term" value="F:rRNA binding"/>
    <property type="evidence" value="ECO:0007669"/>
    <property type="project" value="UniProtKB-UniRule"/>
</dbReference>
<dbReference type="GO" id="GO:0003735">
    <property type="term" value="F:structural constituent of ribosome"/>
    <property type="evidence" value="ECO:0007669"/>
    <property type="project" value="InterPro"/>
</dbReference>
<dbReference type="GO" id="GO:0000049">
    <property type="term" value="F:tRNA binding"/>
    <property type="evidence" value="ECO:0007669"/>
    <property type="project" value="UniProtKB-UniRule"/>
</dbReference>
<dbReference type="GO" id="GO:0006412">
    <property type="term" value="P:translation"/>
    <property type="evidence" value="ECO:0007669"/>
    <property type="project" value="UniProtKB-UniRule"/>
</dbReference>
<dbReference type="FunFam" id="1.10.8.50:FF:000001">
    <property type="entry name" value="30S ribosomal protein S13"/>
    <property type="match status" value="1"/>
</dbReference>
<dbReference type="FunFam" id="4.10.910.10:FF:000001">
    <property type="entry name" value="30S ribosomal protein S13"/>
    <property type="match status" value="1"/>
</dbReference>
<dbReference type="Gene3D" id="1.10.8.50">
    <property type="match status" value="1"/>
</dbReference>
<dbReference type="Gene3D" id="4.10.910.10">
    <property type="entry name" value="30s ribosomal protein s13, domain 2"/>
    <property type="match status" value="1"/>
</dbReference>
<dbReference type="HAMAP" id="MF_01315">
    <property type="entry name" value="Ribosomal_uS13"/>
    <property type="match status" value="1"/>
</dbReference>
<dbReference type="InterPro" id="IPR027437">
    <property type="entry name" value="Rbsml_uS13_C"/>
</dbReference>
<dbReference type="InterPro" id="IPR001892">
    <property type="entry name" value="Ribosomal_uS13"/>
</dbReference>
<dbReference type="InterPro" id="IPR010979">
    <property type="entry name" value="Ribosomal_uS13-like_H2TH"/>
</dbReference>
<dbReference type="InterPro" id="IPR019980">
    <property type="entry name" value="Ribosomal_uS13_bac-type"/>
</dbReference>
<dbReference type="InterPro" id="IPR018269">
    <property type="entry name" value="Ribosomal_uS13_CS"/>
</dbReference>
<dbReference type="NCBIfam" id="TIGR03631">
    <property type="entry name" value="uS13_bact"/>
    <property type="match status" value="1"/>
</dbReference>
<dbReference type="PANTHER" id="PTHR10871">
    <property type="entry name" value="30S RIBOSOMAL PROTEIN S13/40S RIBOSOMAL PROTEIN S18"/>
    <property type="match status" value="1"/>
</dbReference>
<dbReference type="PANTHER" id="PTHR10871:SF1">
    <property type="entry name" value="SMALL RIBOSOMAL SUBUNIT PROTEIN US13M"/>
    <property type="match status" value="1"/>
</dbReference>
<dbReference type="Pfam" id="PF00416">
    <property type="entry name" value="Ribosomal_S13"/>
    <property type="match status" value="1"/>
</dbReference>
<dbReference type="PIRSF" id="PIRSF002134">
    <property type="entry name" value="Ribosomal_S13"/>
    <property type="match status" value="1"/>
</dbReference>
<dbReference type="SUPFAM" id="SSF46946">
    <property type="entry name" value="S13-like H2TH domain"/>
    <property type="match status" value="1"/>
</dbReference>
<dbReference type="PROSITE" id="PS00646">
    <property type="entry name" value="RIBOSOMAL_S13_1"/>
    <property type="match status" value="1"/>
</dbReference>
<dbReference type="PROSITE" id="PS50159">
    <property type="entry name" value="RIBOSOMAL_S13_2"/>
    <property type="match status" value="1"/>
</dbReference>
<reference key="1">
    <citation type="journal article" date="2004" name="Science">
        <title>The genomic sequence of the accidental pathogen Legionella pneumophila.</title>
        <authorList>
            <person name="Chien M."/>
            <person name="Morozova I."/>
            <person name="Shi S."/>
            <person name="Sheng H."/>
            <person name="Chen J."/>
            <person name="Gomez S.M."/>
            <person name="Asamani G."/>
            <person name="Hill K."/>
            <person name="Nuara J."/>
            <person name="Feder M."/>
            <person name="Rineer J."/>
            <person name="Greenberg J.J."/>
            <person name="Steshenko V."/>
            <person name="Park S.H."/>
            <person name="Zhao B."/>
            <person name="Teplitskaya E."/>
            <person name="Edwards J.R."/>
            <person name="Pampou S."/>
            <person name="Georghiou A."/>
            <person name="Chou I.-C."/>
            <person name="Iannuccilli W."/>
            <person name="Ulz M.E."/>
            <person name="Kim D.H."/>
            <person name="Geringer-Sameth A."/>
            <person name="Goldsberry C."/>
            <person name="Morozov P."/>
            <person name="Fischer S.G."/>
            <person name="Segal G."/>
            <person name="Qu X."/>
            <person name="Rzhetsky A."/>
            <person name="Zhang P."/>
            <person name="Cayanis E."/>
            <person name="De Jong P.J."/>
            <person name="Ju J."/>
            <person name="Kalachikov S."/>
            <person name="Shuman H.A."/>
            <person name="Russo J.J."/>
        </authorList>
    </citation>
    <scope>NUCLEOTIDE SEQUENCE [LARGE SCALE GENOMIC DNA]</scope>
    <source>
        <strain>Philadelphia 1 / ATCC 33152 / DSM 7513</strain>
    </source>
</reference>
<organism>
    <name type="scientific">Legionella pneumophila subsp. pneumophila (strain Philadelphia 1 / ATCC 33152 / DSM 7513)</name>
    <dbReference type="NCBI Taxonomy" id="272624"/>
    <lineage>
        <taxon>Bacteria</taxon>
        <taxon>Pseudomonadati</taxon>
        <taxon>Pseudomonadota</taxon>
        <taxon>Gammaproteobacteria</taxon>
        <taxon>Legionellales</taxon>
        <taxon>Legionellaceae</taxon>
        <taxon>Legionella</taxon>
    </lineage>
</organism>
<keyword id="KW-1185">Reference proteome</keyword>
<keyword id="KW-0687">Ribonucleoprotein</keyword>
<keyword id="KW-0689">Ribosomal protein</keyword>
<keyword id="KW-0694">RNA-binding</keyword>
<keyword id="KW-0699">rRNA-binding</keyword>
<keyword id="KW-0820">tRNA-binding</keyword>
<accession>Q5ZYM1</accession>
<protein>
    <recommendedName>
        <fullName evidence="1">Small ribosomal subunit protein uS13</fullName>
    </recommendedName>
    <alternativeName>
        <fullName evidence="3">30S ribosomal protein S13</fullName>
    </alternativeName>
</protein>
<comment type="function">
    <text evidence="1">Located at the top of the head of the 30S subunit, it contacts several helices of the 16S rRNA. In the 70S ribosome it contacts the 23S rRNA (bridge B1a) and protein L5 of the 50S subunit (bridge B1b), connecting the 2 subunits; these bridges are implicated in subunit movement. Contacts the tRNAs in the A and P-sites.</text>
</comment>
<comment type="subunit">
    <text evidence="1">Part of the 30S ribosomal subunit. Forms a loose heterodimer with protein S19. Forms two bridges to the 50S subunit in the 70S ribosome.</text>
</comment>
<comment type="similarity">
    <text evidence="1">Belongs to the universal ribosomal protein uS13 family.</text>
</comment>
<name>RS13_LEGPH</name>
<sequence length="118" mass="13134">MARIAGVNIPDHKHVVIALTAIYGIGKTTSLKLCKTVDIDPSVKVSQLSDAQLESLRTEIAKITVEGDLRRVVTMNIKRLMDLGCYRGLRHRRGLPLRGQRTKTNARTRKGRRKGTSS</sequence>
<proteinExistence type="inferred from homology"/>
<feature type="chain" id="PRO_0000230521" description="Small ribosomal subunit protein uS13">
    <location>
        <begin position="1"/>
        <end position="118"/>
    </location>
</feature>
<feature type="region of interest" description="Disordered" evidence="2">
    <location>
        <begin position="94"/>
        <end position="118"/>
    </location>
</feature>
<gene>
    <name evidence="1" type="primary">rpsM</name>
    <name type="ordered locus">lpg0351</name>
</gene>